<sequence length="379" mass="40799">MLASVPAPRPAKKDSAASRRKSASKSTGAAVKDGSSARVSASGAAESPKQSCAQVHGVDFQSLVHATQEETLRAVVSSLPTTGLQATQIGRARQLVQQILHHRSPEDRVFLAYTSNMISCGLRDTFTYLARERLVDCFISSAGGIEEDVIKCGGSTLLGQFGQDGRALRRRGINRIGNLLVPNDNYCWFEDFFTPVLESVQEAQRASRWKTHTAPSEIIEAMGAAIAKNHPDTCTSSLVYWCYRNGISVFSPAFTDGSMGDMIYFYNFSHKGLVVDPLEDVVRLRKLAAKERGRNLAIVLGGGLPKHHLLRNVPMDAVVMVTTGLEADGCVSSGVLADDVACGLLREETETVRVQGDATVVFPLMLIAETAATREGAAA</sequence>
<dbReference type="EMBL" id="EF512031">
    <property type="protein sequence ID" value="ABP65295.1"/>
    <property type="molecule type" value="Genomic_DNA"/>
</dbReference>
<dbReference type="SMR" id="A4ZZ93"/>
<dbReference type="VEuPathDB" id="TriTrypDB:LdBPK_200270.1"/>
<dbReference type="VEuPathDB" id="TriTrypDB:LdCL_200007500"/>
<dbReference type="VEuPathDB" id="TriTrypDB:LDHU3_20.0290"/>
<dbReference type="GO" id="GO:0005737">
    <property type="term" value="C:cytoplasm"/>
    <property type="evidence" value="ECO:0007669"/>
    <property type="project" value="TreeGrafter"/>
</dbReference>
<dbReference type="GO" id="GO:0034038">
    <property type="term" value="F:deoxyhypusine synthase activity"/>
    <property type="evidence" value="ECO:0007669"/>
    <property type="project" value="TreeGrafter"/>
</dbReference>
<dbReference type="FunFam" id="3.40.910.10:FF:000010">
    <property type="entry name" value="Deoxyhypusine synthase"/>
    <property type="match status" value="1"/>
</dbReference>
<dbReference type="Gene3D" id="3.40.910.10">
    <property type="entry name" value="Deoxyhypusine synthase"/>
    <property type="match status" value="1"/>
</dbReference>
<dbReference type="InterPro" id="IPR002773">
    <property type="entry name" value="Deoxyhypusine_synthase"/>
</dbReference>
<dbReference type="InterPro" id="IPR036982">
    <property type="entry name" value="Deoxyhypusine_synthase_sf"/>
</dbReference>
<dbReference type="InterPro" id="IPR029035">
    <property type="entry name" value="DHS-like_NAD/FAD-binding_dom"/>
</dbReference>
<dbReference type="PANTHER" id="PTHR11703">
    <property type="entry name" value="DEOXYHYPUSINE SYNTHASE"/>
    <property type="match status" value="1"/>
</dbReference>
<dbReference type="PANTHER" id="PTHR11703:SF0">
    <property type="entry name" value="DEOXYHYPUSINE SYNTHASE"/>
    <property type="match status" value="1"/>
</dbReference>
<dbReference type="Pfam" id="PF01916">
    <property type="entry name" value="DS"/>
    <property type="match status" value="1"/>
</dbReference>
<dbReference type="SUPFAM" id="SSF52467">
    <property type="entry name" value="DHS-like NAD/FAD-binding domain"/>
    <property type="match status" value="1"/>
</dbReference>
<proteinExistence type="evidence at protein level"/>
<feature type="chain" id="PRO_0000419759" description="Inactive deoxyhypusine synthase">
    <location>
        <begin position="1"/>
        <end position="379"/>
    </location>
</feature>
<feature type="region of interest" description="Disordered" evidence="3">
    <location>
        <begin position="1"/>
        <end position="48"/>
    </location>
</feature>
<feature type="compositionally biased region" description="Low complexity" evidence="3">
    <location>
        <begin position="36"/>
        <end position="47"/>
    </location>
</feature>
<feature type="binding site" evidence="1">
    <location>
        <begin position="115"/>
        <end position="119"/>
    </location>
    <ligand>
        <name>NAD(+)</name>
        <dbReference type="ChEBI" id="CHEBI:57540"/>
    </ligand>
</feature>
<feature type="binding site" evidence="1">
    <location>
        <begin position="141"/>
        <end position="143"/>
    </location>
    <ligand>
        <name>NAD(+)</name>
        <dbReference type="ChEBI" id="CHEBI:57540"/>
    </ligand>
</feature>
<feature type="binding site" evidence="1">
    <location>
        <begin position="146"/>
        <end position="147"/>
    </location>
    <ligand>
        <name>spermidine</name>
        <dbReference type="ChEBI" id="CHEBI:57834"/>
    </ligand>
</feature>
<feature type="binding site" evidence="1">
    <location>
        <position position="147"/>
    </location>
    <ligand>
        <name>NAD(+)</name>
        <dbReference type="ChEBI" id="CHEBI:57540"/>
    </ligand>
</feature>
<feature type="binding site" evidence="1">
    <location>
        <position position="256"/>
    </location>
    <ligand>
        <name>NAD(+)</name>
        <dbReference type="ChEBI" id="CHEBI:57540"/>
    </ligand>
</feature>
<feature type="binding site" evidence="1">
    <location>
        <position position="261"/>
    </location>
    <ligand>
        <name>spermidine</name>
        <dbReference type="ChEBI" id="CHEBI:57834"/>
    </ligand>
</feature>
<feature type="binding site" evidence="1">
    <location>
        <position position="302"/>
    </location>
    <ligand>
        <name>NAD(+)</name>
        <dbReference type="ChEBI" id="CHEBI:57540"/>
    </ligand>
</feature>
<feature type="binding site" evidence="1">
    <location>
        <position position="307"/>
    </location>
    <ligand>
        <name>spermidine</name>
        <dbReference type="ChEBI" id="CHEBI:57834"/>
    </ligand>
</feature>
<feature type="binding site" evidence="1">
    <location>
        <begin position="323"/>
        <end position="324"/>
    </location>
    <ligand>
        <name>NAD(+)</name>
        <dbReference type="ChEBI" id="CHEBI:57540"/>
    </ligand>
</feature>
<feature type="binding site" evidence="1">
    <location>
        <begin position="329"/>
        <end position="331"/>
    </location>
    <ligand>
        <name>spermidine</name>
        <dbReference type="ChEBI" id="CHEBI:57834"/>
    </ligand>
</feature>
<feature type="binding site" evidence="1">
    <location>
        <begin position="338"/>
        <end position="344"/>
    </location>
    <ligand>
        <name>spermidine</name>
        <dbReference type="ChEBI" id="CHEBI:57834"/>
    </ligand>
</feature>
<feature type="binding site" evidence="1">
    <location>
        <begin position="357"/>
        <end position="358"/>
    </location>
    <ligand>
        <name>NAD(+)</name>
        <dbReference type="ChEBI" id="CHEBI:57540"/>
    </ligand>
</feature>
<feature type="mutagenesis site" description="Still catalytically inactive." evidence="4">
    <original>L</original>
    <variation>K</variation>
    <location>
        <position position="344"/>
    </location>
</feature>
<evidence type="ECO:0000250" key="1">
    <source>
        <dbReference type="UniProtKB" id="P49366"/>
    </source>
</evidence>
<evidence type="ECO:0000255" key="2"/>
<evidence type="ECO:0000256" key="3">
    <source>
        <dbReference type="SAM" id="MobiDB-lite"/>
    </source>
</evidence>
<evidence type="ECO:0000269" key="4">
    <source>
    </source>
</evidence>
<evidence type="ECO:0000303" key="5">
    <source>
    </source>
</evidence>
<evidence type="ECO:0000305" key="6"/>
<evidence type="ECO:0000312" key="7">
    <source>
        <dbReference type="EMBL" id="ABP65295.1"/>
    </source>
</evidence>
<name>DHYSL_LEIDO</name>
<comment type="similarity">
    <text evidence="2">Belongs to the deoxyhypusine synthase family.</text>
</comment>
<comment type="caution">
    <text evidence="6">Although similar to deoxyhypusine synthase, lacks the active site Lys at position 344 and does not show deoxyhypusine synthase activity. Converting Leu-344 to a lysine does not restore activity.</text>
</comment>
<organism>
    <name type="scientific">Leishmania donovani</name>
    <dbReference type="NCBI Taxonomy" id="5661"/>
    <lineage>
        <taxon>Eukaryota</taxon>
        <taxon>Discoba</taxon>
        <taxon>Euglenozoa</taxon>
        <taxon>Kinetoplastea</taxon>
        <taxon>Metakinetoplastina</taxon>
        <taxon>Trypanosomatida</taxon>
        <taxon>Trypanosomatidae</taxon>
        <taxon>Leishmaniinae</taxon>
        <taxon>Leishmania</taxon>
    </lineage>
</organism>
<keyword id="KW-0520">NAD</keyword>
<protein>
    <recommendedName>
        <fullName>Inactive deoxyhypusine synthase</fullName>
    </recommendedName>
    <alternativeName>
        <fullName>Deoxyhypusine synthase-like protein</fullName>
    </alternativeName>
    <alternativeName>
        <fullName evidence="5">Deoxyhypusine synthase-like protein from chromosome 20</fullName>
        <shortName evidence="5">DHSL20</shortName>
    </alternativeName>
</protein>
<accession>A4ZZ93</accession>
<reference evidence="6 7" key="1">
    <citation type="journal article" date="2010" name="J. Biol. Chem.">
        <title>Identification and characterization of a novel deoxyhypusine synthase in Leishmania donovani.</title>
        <authorList>
            <person name="Chawla B."/>
            <person name="Jhingran A."/>
            <person name="Singh S."/>
            <person name="Tyagi N."/>
            <person name="Park M.H."/>
            <person name="Srinivasan N."/>
            <person name="Roberts S.C."/>
            <person name="Madhubala R."/>
        </authorList>
    </citation>
    <scope>NUCLEOTIDE SEQUENCE [GENOMIC DNA]</scope>
    <scope>3D-STRUCTURE MODELING</scope>
    <scope>MUTAGENESIS OF LEU-344</scope>
</reference>